<protein>
    <recommendedName>
        <fullName evidence="1">Tyrosine--tRNA ligase</fullName>
        <ecNumber evidence="1">6.1.1.1</ecNumber>
    </recommendedName>
    <alternativeName>
        <fullName evidence="1">Tyrosyl-tRNA synthetase</fullName>
        <shortName evidence="1">TyrRS</shortName>
    </alternativeName>
</protein>
<evidence type="ECO:0000255" key="1">
    <source>
        <dbReference type="HAMAP-Rule" id="MF_02007"/>
    </source>
</evidence>
<comment type="function">
    <text evidence="1">Catalyzes the attachment of tyrosine to tRNA(Tyr) in a two-step reaction: tyrosine is first activated by ATP to form Tyr-AMP and then transferred to the acceptor end of tRNA(Tyr).</text>
</comment>
<comment type="catalytic activity">
    <reaction evidence="1">
        <text>tRNA(Tyr) + L-tyrosine + ATP = L-tyrosyl-tRNA(Tyr) + AMP + diphosphate + H(+)</text>
        <dbReference type="Rhea" id="RHEA:10220"/>
        <dbReference type="Rhea" id="RHEA-COMP:9706"/>
        <dbReference type="Rhea" id="RHEA-COMP:9707"/>
        <dbReference type="ChEBI" id="CHEBI:15378"/>
        <dbReference type="ChEBI" id="CHEBI:30616"/>
        <dbReference type="ChEBI" id="CHEBI:33019"/>
        <dbReference type="ChEBI" id="CHEBI:58315"/>
        <dbReference type="ChEBI" id="CHEBI:78442"/>
        <dbReference type="ChEBI" id="CHEBI:78536"/>
        <dbReference type="ChEBI" id="CHEBI:456215"/>
        <dbReference type="EC" id="6.1.1.1"/>
    </reaction>
</comment>
<comment type="subunit">
    <text evidence="1">Homodimer.</text>
</comment>
<comment type="subcellular location">
    <subcellularLocation>
        <location evidence="1">Cytoplasm</location>
    </subcellularLocation>
</comment>
<comment type="similarity">
    <text evidence="1">Belongs to the class-I aminoacyl-tRNA synthetase family. TyrS type 2 subfamily.</text>
</comment>
<organism>
    <name type="scientific">Prochlorococcus marinus (strain MIT 9312)</name>
    <dbReference type="NCBI Taxonomy" id="74546"/>
    <lineage>
        <taxon>Bacteria</taxon>
        <taxon>Bacillati</taxon>
        <taxon>Cyanobacteriota</taxon>
        <taxon>Cyanophyceae</taxon>
        <taxon>Synechococcales</taxon>
        <taxon>Prochlorococcaceae</taxon>
        <taxon>Prochlorococcus</taxon>
    </lineage>
</organism>
<feature type="chain" id="PRO_0000236745" description="Tyrosine--tRNA ligase">
    <location>
        <begin position="1"/>
        <end position="412"/>
    </location>
</feature>
<feature type="domain" description="S4 RNA-binding" evidence="1">
    <location>
        <begin position="348"/>
        <end position="411"/>
    </location>
</feature>
<feature type="short sequence motif" description="'HIGH' region">
    <location>
        <begin position="50"/>
        <end position="59"/>
    </location>
</feature>
<feature type="short sequence motif" description="'KMSKS' region">
    <location>
        <begin position="244"/>
        <end position="248"/>
    </location>
</feature>
<feature type="binding site" evidence="1">
    <location>
        <position position="247"/>
    </location>
    <ligand>
        <name>ATP</name>
        <dbReference type="ChEBI" id="CHEBI:30616"/>
    </ligand>
</feature>
<keyword id="KW-0030">Aminoacyl-tRNA synthetase</keyword>
<keyword id="KW-0067">ATP-binding</keyword>
<keyword id="KW-0963">Cytoplasm</keyword>
<keyword id="KW-0436">Ligase</keyword>
<keyword id="KW-0547">Nucleotide-binding</keyword>
<keyword id="KW-0648">Protein biosynthesis</keyword>
<keyword id="KW-0694">RNA-binding</keyword>
<name>SYY_PROM9</name>
<reference key="1">
    <citation type="journal article" date="2006" name="Science">
        <title>Genomic islands and the ecology and evolution of Prochlorococcus.</title>
        <authorList>
            <person name="Coleman M.L."/>
            <person name="Sullivan M.B."/>
            <person name="Martiny A.C."/>
            <person name="Steglich C."/>
            <person name="Barry K."/>
            <person name="Delong E.F."/>
            <person name="Chisholm S.W."/>
        </authorList>
    </citation>
    <scope>NUCLEOTIDE SEQUENCE [LARGE SCALE GENOMIC DNA]</scope>
    <source>
        <strain>MIT 9312</strain>
    </source>
</reference>
<proteinExistence type="inferred from homology"/>
<gene>
    <name evidence="1" type="primary">tyrS</name>
    <name type="ordered locus">PMT9312_1427</name>
</gene>
<dbReference type="EC" id="6.1.1.1" evidence="1"/>
<dbReference type="EMBL" id="CP000111">
    <property type="protein sequence ID" value="ABB50487.1"/>
    <property type="molecule type" value="Genomic_DNA"/>
</dbReference>
<dbReference type="RefSeq" id="WP_011376971.1">
    <property type="nucleotide sequence ID" value="NC_007577.1"/>
</dbReference>
<dbReference type="SMR" id="Q319F8"/>
<dbReference type="STRING" id="74546.PMT9312_1427"/>
<dbReference type="KEGG" id="pmi:PMT9312_1427"/>
<dbReference type="eggNOG" id="COG0162">
    <property type="taxonomic scope" value="Bacteria"/>
</dbReference>
<dbReference type="HOGENOM" id="CLU_024003_5_0_3"/>
<dbReference type="OrthoDB" id="9804243at2"/>
<dbReference type="Proteomes" id="UP000002715">
    <property type="component" value="Chromosome"/>
</dbReference>
<dbReference type="GO" id="GO:0005829">
    <property type="term" value="C:cytosol"/>
    <property type="evidence" value="ECO:0007669"/>
    <property type="project" value="TreeGrafter"/>
</dbReference>
<dbReference type="GO" id="GO:0005524">
    <property type="term" value="F:ATP binding"/>
    <property type="evidence" value="ECO:0007669"/>
    <property type="project" value="UniProtKB-UniRule"/>
</dbReference>
<dbReference type="GO" id="GO:0003723">
    <property type="term" value="F:RNA binding"/>
    <property type="evidence" value="ECO:0007669"/>
    <property type="project" value="UniProtKB-KW"/>
</dbReference>
<dbReference type="GO" id="GO:0004831">
    <property type="term" value="F:tyrosine-tRNA ligase activity"/>
    <property type="evidence" value="ECO:0007669"/>
    <property type="project" value="UniProtKB-UniRule"/>
</dbReference>
<dbReference type="GO" id="GO:0006437">
    <property type="term" value="P:tyrosyl-tRNA aminoacylation"/>
    <property type="evidence" value="ECO:0007669"/>
    <property type="project" value="UniProtKB-UniRule"/>
</dbReference>
<dbReference type="CDD" id="cd00805">
    <property type="entry name" value="TyrRS_core"/>
    <property type="match status" value="1"/>
</dbReference>
<dbReference type="Gene3D" id="3.40.50.620">
    <property type="entry name" value="HUPs"/>
    <property type="match status" value="1"/>
</dbReference>
<dbReference type="Gene3D" id="3.10.290.10">
    <property type="entry name" value="RNA-binding S4 domain"/>
    <property type="match status" value="1"/>
</dbReference>
<dbReference type="Gene3D" id="1.10.240.10">
    <property type="entry name" value="Tyrosyl-Transfer RNA Synthetase"/>
    <property type="match status" value="1"/>
</dbReference>
<dbReference type="HAMAP" id="MF_02007">
    <property type="entry name" value="Tyr_tRNA_synth_type2"/>
    <property type="match status" value="1"/>
</dbReference>
<dbReference type="InterPro" id="IPR002305">
    <property type="entry name" value="aa-tRNA-synth_Ic"/>
</dbReference>
<dbReference type="InterPro" id="IPR014729">
    <property type="entry name" value="Rossmann-like_a/b/a_fold"/>
</dbReference>
<dbReference type="InterPro" id="IPR036986">
    <property type="entry name" value="S4_RNA-bd_sf"/>
</dbReference>
<dbReference type="InterPro" id="IPR002307">
    <property type="entry name" value="Tyr-tRNA-ligase"/>
</dbReference>
<dbReference type="InterPro" id="IPR024088">
    <property type="entry name" value="Tyr-tRNA-ligase_bac-type"/>
</dbReference>
<dbReference type="InterPro" id="IPR024108">
    <property type="entry name" value="Tyr-tRNA-ligase_bac_2"/>
</dbReference>
<dbReference type="NCBIfam" id="TIGR00234">
    <property type="entry name" value="tyrS"/>
    <property type="match status" value="1"/>
</dbReference>
<dbReference type="PANTHER" id="PTHR11766:SF1">
    <property type="entry name" value="TYROSINE--TRNA LIGASE"/>
    <property type="match status" value="1"/>
</dbReference>
<dbReference type="PANTHER" id="PTHR11766">
    <property type="entry name" value="TYROSYL-TRNA SYNTHETASE"/>
    <property type="match status" value="1"/>
</dbReference>
<dbReference type="Pfam" id="PF00579">
    <property type="entry name" value="tRNA-synt_1b"/>
    <property type="match status" value="1"/>
</dbReference>
<dbReference type="PRINTS" id="PR01040">
    <property type="entry name" value="TRNASYNTHTYR"/>
</dbReference>
<dbReference type="SUPFAM" id="SSF55174">
    <property type="entry name" value="Alpha-L RNA-binding motif"/>
    <property type="match status" value="1"/>
</dbReference>
<dbReference type="SUPFAM" id="SSF52374">
    <property type="entry name" value="Nucleotidylyl transferase"/>
    <property type="match status" value="1"/>
</dbReference>
<dbReference type="PROSITE" id="PS50889">
    <property type="entry name" value="S4"/>
    <property type="match status" value="1"/>
</dbReference>
<accession>Q319F8</accession>
<sequence>MSDKLILPSWLSRGIEEYFPIKGIDQTFSEIIDDAKKNNKKLRVKLGIDPTGTDIHLGHSILFKKLRAFQDNGHIAVLIIGDFTAQIGDPTGKNKTRVQLSEKQVKDNAKTYLTQLGMGKPANESILDFDSKDKIEIRYNSEWLKGLNLNSIIELMGSATVSQMLAKEEFNKRYNSQVPIALHEFLYPLLQGYDSVVVQSDIELGGTDQKFNIAIGRDLQRHFKQEPQFGVLLPILTGLDGIKKMSKSEFNTVGLTEDSLSMYSKLEKVPDNIIPTYFELLTELDLSVLNDANPRELQRRMALEVTTLFHGAEEASKAQSNCEKLFLGHKEKVGEIPEISLKDIVFPVKFFYLLSSLKLFKSSSESKRSIKGGGVKIDSQKVINPDIVFDSKKDLEGKILQIGKKIIKRFEN</sequence>